<gene>
    <name evidence="1" type="primary">mnmC</name>
    <name type="ordered locus">PsycPRwf_1989</name>
</gene>
<dbReference type="EC" id="2.1.1.61" evidence="1"/>
<dbReference type="EC" id="1.5.-.-" evidence="1"/>
<dbReference type="EMBL" id="CP000713">
    <property type="protein sequence ID" value="ABQ94929.1"/>
    <property type="molecule type" value="Genomic_DNA"/>
</dbReference>
<dbReference type="SMR" id="A5WGY8"/>
<dbReference type="STRING" id="349106.PsycPRwf_1989"/>
<dbReference type="KEGG" id="prw:PsycPRwf_1989"/>
<dbReference type="eggNOG" id="COG0665">
    <property type="taxonomic scope" value="Bacteria"/>
</dbReference>
<dbReference type="eggNOG" id="COG4121">
    <property type="taxonomic scope" value="Bacteria"/>
</dbReference>
<dbReference type="HOGENOM" id="CLU_022427_1_0_6"/>
<dbReference type="GO" id="GO:0005737">
    <property type="term" value="C:cytoplasm"/>
    <property type="evidence" value="ECO:0007669"/>
    <property type="project" value="UniProtKB-SubCell"/>
</dbReference>
<dbReference type="GO" id="GO:0050660">
    <property type="term" value="F:flavin adenine dinucleotide binding"/>
    <property type="evidence" value="ECO:0007669"/>
    <property type="project" value="UniProtKB-UniRule"/>
</dbReference>
<dbReference type="GO" id="GO:0016645">
    <property type="term" value="F:oxidoreductase activity, acting on the CH-NH group of donors"/>
    <property type="evidence" value="ECO:0007669"/>
    <property type="project" value="InterPro"/>
</dbReference>
<dbReference type="GO" id="GO:0004808">
    <property type="term" value="F:tRNA (5-methylaminomethyl-2-thiouridylate)(34)-methyltransferase activity"/>
    <property type="evidence" value="ECO:0007669"/>
    <property type="project" value="UniProtKB-EC"/>
</dbReference>
<dbReference type="GO" id="GO:0032259">
    <property type="term" value="P:methylation"/>
    <property type="evidence" value="ECO:0007669"/>
    <property type="project" value="UniProtKB-KW"/>
</dbReference>
<dbReference type="GO" id="GO:0002097">
    <property type="term" value="P:tRNA wobble base modification"/>
    <property type="evidence" value="ECO:0007669"/>
    <property type="project" value="UniProtKB-UniRule"/>
</dbReference>
<dbReference type="Gene3D" id="3.30.9.10">
    <property type="entry name" value="D-Amino Acid Oxidase, subunit A, domain 2"/>
    <property type="match status" value="1"/>
</dbReference>
<dbReference type="Gene3D" id="3.50.50.60">
    <property type="entry name" value="FAD/NAD(P)-binding domain"/>
    <property type="match status" value="1"/>
</dbReference>
<dbReference type="Gene3D" id="3.40.50.150">
    <property type="entry name" value="Vaccinia Virus protein VP39"/>
    <property type="match status" value="1"/>
</dbReference>
<dbReference type="HAMAP" id="MF_01102">
    <property type="entry name" value="MnmC"/>
    <property type="match status" value="1"/>
</dbReference>
<dbReference type="InterPro" id="IPR006076">
    <property type="entry name" value="FAD-dep_OxRdtase"/>
</dbReference>
<dbReference type="InterPro" id="IPR036188">
    <property type="entry name" value="FAD/NAD-bd_sf"/>
</dbReference>
<dbReference type="InterPro" id="IPR008471">
    <property type="entry name" value="MnmC-like_methylTransf"/>
</dbReference>
<dbReference type="InterPro" id="IPR029063">
    <property type="entry name" value="SAM-dependent_MTases_sf"/>
</dbReference>
<dbReference type="InterPro" id="IPR023032">
    <property type="entry name" value="tRNA_MAMT_biosynth_bifunc_MnmC"/>
</dbReference>
<dbReference type="InterPro" id="IPR047785">
    <property type="entry name" value="tRNA_MNMC2"/>
</dbReference>
<dbReference type="InterPro" id="IPR017610">
    <property type="entry name" value="tRNA_S-uridine_synth_MnmC_C"/>
</dbReference>
<dbReference type="NCBIfam" id="TIGR03197">
    <property type="entry name" value="MnmC_Cterm"/>
    <property type="match status" value="1"/>
</dbReference>
<dbReference type="NCBIfam" id="NF033855">
    <property type="entry name" value="tRNA_MNMC2"/>
    <property type="match status" value="1"/>
</dbReference>
<dbReference type="PANTHER" id="PTHR13847">
    <property type="entry name" value="SARCOSINE DEHYDROGENASE-RELATED"/>
    <property type="match status" value="1"/>
</dbReference>
<dbReference type="PANTHER" id="PTHR13847:SF283">
    <property type="entry name" value="TRNA 5-METHYLAMINOMETHYL-2-THIOURIDINE BIOSYNTHESIS BIFUNCTIONAL PROTEIN MNMC"/>
    <property type="match status" value="1"/>
</dbReference>
<dbReference type="Pfam" id="PF01266">
    <property type="entry name" value="DAO"/>
    <property type="match status" value="1"/>
</dbReference>
<dbReference type="Pfam" id="PF05430">
    <property type="entry name" value="Methyltransf_30"/>
    <property type="match status" value="1"/>
</dbReference>
<dbReference type="SUPFAM" id="SSF51971">
    <property type="entry name" value="Nucleotide-binding domain"/>
    <property type="match status" value="1"/>
</dbReference>
<name>MNMC_PSYWF</name>
<organism>
    <name type="scientific">Psychrobacter sp. (strain PRwf-1)</name>
    <dbReference type="NCBI Taxonomy" id="349106"/>
    <lineage>
        <taxon>Bacteria</taxon>
        <taxon>Pseudomonadati</taxon>
        <taxon>Pseudomonadota</taxon>
        <taxon>Gammaproteobacteria</taxon>
        <taxon>Moraxellales</taxon>
        <taxon>Moraxellaceae</taxon>
        <taxon>Psychrobacter</taxon>
    </lineage>
</organism>
<keyword id="KW-0963">Cytoplasm</keyword>
<keyword id="KW-0274">FAD</keyword>
<keyword id="KW-0285">Flavoprotein</keyword>
<keyword id="KW-0489">Methyltransferase</keyword>
<keyword id="KW-0511">Multifunctional enzyme</keyword>
<keyword id="KW-0560">Oxidoreductase</keyword>
<keyword id="KW-0949">S-adenosyl-L-methionine</keyword>
<keyword id="KW-0808">Transferase</keyword>
<keyword id="KW-0819">tRNA processing</keyword>
<feature type="chain" id="PRO_0000348016" description="tRNA 5-methylaminomethyl-2-thiouridine biosynthesis bifunctional protein MnmC">
    <location>
        <begin position="1"/>
        <end position="739"/>
    </location>
</feature>
<feature type="region of interest" description="tRNA (mnm(5)s(2)U34)-methyltransferase">
    <location>
        <begin position="1"/>
        <end position="282"/>
    </location>
</feature>
<feature type="region of interest" description="FAD-dependent cmnm(5)s(2)U34 oxidoreductase">
    <location>
        <begin position="330"/>
        <end position="739"/>
    </location>
</feature>
<accession>A5WGY8</accession>
<proteinExistence type="inferred from homology"/>
<evidence type="ECO:0000255" key="1">
    <source>
        <dbReference type="HAMAP-Rule" id="MF_01102"/>
    </source>
</evidence>
<reference key="1">
    <citation type="submission" date="2007-05" db="EMBL/GenBank/DDBJ databases">
        <title>Complete sequence of chromosome of Psychrobacter sp. PRwf-1.</title>
        <authorList>
            <consortium name="US DOE Joint Genome Institute"/>
            <person name="Copeland A."/>
            <person name="Lucas S."/>
            <person name="Lapidus A."/>
            <person name="Barry K."/>
            <person name="Detter J.C."/>
            <person name="Glavina del Rio T."/>
            <person name="Hammon N."/>
            <person name="Israni S."/>
            <person name="Dalin E."/>
            <person name="Tice H."/>
            <person name="Pitluck S."/>
            <person name="Chain P."/>
            <person name="Malfatti S."/>
            <person name="Shin M."/>
            <person name="Vergez L."/>
            <person name="Schmutz J."/>
            <person name="Larimer F."/>
            <person name="Land M."/>
            <person name="Hauser L."/>
            <person name="Kyrpides N."/>
            <person name="Kim E."/>
            <person name="Tiedje J."/>
            <person name="Richardson P."/>
        </authorList>
    </citation>
    <scope>NUCLEOTIDE SEQUENCE [LARGE SCALE GENOMIC DNA]</scope>
    <source>
        <strain>PRwf-1</strain>
    </source>
</reference>
<sequence>MDKVTPAKLSWREDELGNVVPVSEIFGDVYYSLVDGLNESRYVFLTQNKLPERFEALFSRANSSAASNFSIAELGFGTGLNILATWQLWEHSKQQFHTYFNSQTNLQTSSQDHLKGSRSLTPRLHIISTEKHPLTHADLSRSLESWKHKDTSLVPFVDQLLALYPTLISGCHRLQLAEDVTLDLWLGDACFSLQQLANSYDTLPYGAHIDAWYLDGFAPACNESLWADQIFEQVKRLSKPGTTAATFSSAGVVKRGLMAAGFEIKKTKGFGRKREMLTATKLEPVAVSDDTSDNQGATEYDAKSTLALRSKEQVTLDTHAVTPNEQIAVIGAGVCGLMAAWSLAQRGNAVSLIDKEAPLAGASGNPRALLAPKMTPLAHVAEHLHSISYLYSQRFYRQIDQGEHKIFTPTTTLDLLQKSNVDVHQIAEYPEQMATTLSLDSARDISGLQQQDLTANLYLPQSGLINPKALADKVLTHPNISFKQANIKRITPLQAEAFDDVTEVSEVIEVTADITVQPAKRTKVMLHCESGEVLSVNRVVIAAAFESQSLDARIFEFRKIRGQLSWFEPTTEQLQALPTLPLKYSGYCAPFIPQPGDEAVNSVTPSVPTFLLGASFIRNDLDDEIRLSEHAINHQKLLTALPELSAVLPLPDTEADLYQRWQARVGIRSQTPDYHPLVGAVDEQGLIWTLSGMGSKGYAFAPLCAQVLADMMTAQFVPLPAALLAKLSVHRSSLKKPLS</sequence>
<comment type="function">
    <text evidence="1">Catalyzes the last two steps in the biosynthesis of 5-methylaminomethyl-2-thiouridine (mnm(5)s(2)U) at the wobble position (U34) in tRNA. Catalyzes the FAD-dependent demodification of cmnm(5)s(2)U34 to nm(5)s(2)U34, followed by the transfer of a methyl group from S-adenosyl-L-methionine to nm(5)s(2)U34, to form mnm(5)s(2)U34.</text>
</comment>
<comment type="catalytic activity">
    <reaction evidence="1">
        <text>5-aminomethyl-2-thiouridine(34) in tRNA + S-adenosyl-L-methionine = 5-methylaminomethyl-2-thiouridine(34) in tRNA + S-adenosyl-L-homocysteine + H(+)</text>
        <dbReference type="Rhea" id="RHEA:19569"/>
        <dbReference type="Rhea" id="RHEA-COMP:10195"/>
        <dbReference type="Rhea" id="RHEA-COMP:10197"/>
        <dbReference type="ChEBI" id="CHEBI:15378"/>
        <dbReference type="ChEBI" id="CHEBI:57856"/>
        <dbReference type="ChEBI" id="CHEBI:59789"/>
        <dbReference type="ChEBI" id="CHEBI:74454"/>
        <dbReference type="ChEBI" id="CHEBI:74455"/>
        <dbReference type="EC" id="2.1.1.61"/>
    </reaction>
</comment>
<comment type="cofactor">
    <cofactor evidence="1">
        <name>FAD</name>
        <dbReference type="ChEBI" id="CHEBI:57692"/>
    </cofactor>
</comment>
<comment type="subcellular location">
    <subcellularLocation>
        <location evidence="1">Cytoplasm</location>
    </subcellularLocation>
</comment>
<comment type="similarity">
    <text evidence="1">In the N-terminal section; belongs to the methyltransferase superfamily. tRNA (mnm(5)s(2)U34)-methyltransferase family.</text>
</comment>
<comment type="similarity">
    <text evidence="1">In the C-terminal section; belongs to the DAO family.</text>
</comment>
<protein>
    <recommendedName>
        <fullName evidence="1">tRNA 5-methylaminomethyl-2-thiouridine biosynthesis bifunctional protein MnmC</fullName>
        <shortName evidence="1">tRNA mnm(5)s(2)U biosynthesis bifunctional protein</shortName>
    </recommendedName>
    <domain>
        <recommendedName>
            <fullName evidence="1">tRNA (mnm(5)s(2)U34)-methyltransferase</fullName>
            <ecNumber evidence="1">2.1.1.61</ecNumber>
        </recommendedName>
    </domain>
    <domain>
        <recommendedName>
            <fullName evidence="1">FAD-dependent cmnm(5)s(2)U34 oxidoreductase</fullName>
            <ecNumber evidence="1">1.5.-.-</ecNumber>
        </recommendedName>
    </domain>
</protein>